<keyword id="KW-0238">DNA-binding</keyword>
<keyword id="KW-0371">Homeobox</keyword>
<keyword id="KW-0524">Neurogenesis</keyword>
<keyword id="KW-0539">Nucleus</keyword>
<keyword id="KW-1185">Reference proteome</keyword>
<dbReference type="EMBL" id="AY205144">
    <property type="protein sequence ID" value="AAO46042.2"/>
    <property type="molecule type" value="mRNA"/>
</dbReference>
<dbReference type="EMBL" id="BX284606">
    <property type="protein sequence ID" value="CAB00867.4"/>
    <property type="molecule type" value="Genomic_DNA"/>
</dbReference>
<dbReference type="RefSeq" id="NP_510169.4">
    <property type="nucleotide sequence ID" value="NM_077768.8"/>
</dbReference>
<dbReference type="SMR" id="G5EE18"/>
<dbReference type="FunCoup" id="G5EE18">
    <property type="interactions" value="19"/>
</dbReference>
<dbReference type="IntAct" id="G5EE18">
    <property type="interactions" value="3"/>
</dbReference>
<dbReference type="STRING" id="6239.K03A11.3.1"/>
<dbReference type="PaxDb" id="6239-K03A11.3"/>
<dbReference type="EnsemblMetazoa" id="K03A11.3.1">
    <property type="protein sequence ID" value="K03A11.3.1"/>
    <property type="gene ID" value="WBGene00000450"/>
</dbReference>
<dbReference type="GeneID" id="191619"/>
<dbReference type="KEGG" id="cel:CELE_K03A11.3"/>
<dbReference type="AGR" id="WB:WBGene00000450"/>
<dbReference type="CTD" id="191619"/>
<dbReference type="WormBase" id="K03A11.3">
    <property type="protein sequence ID" value="CE42603"/>
    <property type="gene ID" value="WBGene00000450"/>
    <property type="gene designation" value="ceh-28"/>
</dbReference>
<dbReference type="eggNOG" id="KOG0842">
    <property type="taxonomic scope" value="Eukaryota"/>
</dbReference>
<dbReference type="GeneTree" id="ENSGT00940000168126"/>
<dbReference type="HOGENOM" id="CLU_1361488_0_0_1"/>
<dbReference type="InParanoid" id="G5EE18"/>
<dbReference type="OMA" id="PYQPVIP"/>
<dbReference type="OrthoDB" id="3137333at2759"/>
<dbReference type="PhylomeDB" id="G5EE18"/>
<dbReference type="PRO" id="PR:G5EE18"/>
<dbReference type="Proteomes" id="UP000001940">
    <property type="component" value="Chromosome X"/>
</dbReference>
<dbReference type="GO" id="GO:0000785">
    <property type="term" value="C:chromatin"/>
    <property type="evidence" value="ECO:0000314"/>
    <property type="project" value="UniProtKB"/>
</dbReference>
<dbReference type="GO" id="GO:0005634">
    <property type="term" value="C:nucleus"/>
    <property type="evidence" value="ECO:0000250"/>
    <property type="project" value="WormBase"/>
</dbReference>
<dbReference type="GO" id="GO:0003700">
    <property type="term" value="F:DNA-binding transcription factor activity"/>
    <property type="evidence" value="ECO:0000250"/>
    <property type="project" value="WormBase"/>
</dbReference>
<dbReference type="GO" id="GO:0000981">
    <property type="term" value="F:DNA-binding transcription factor activity, RNA polymerase II-specific"/>
    <property type="evidence" value="ECO:0000250"/>
    <property type="project" value="WormBase"/>
</dbReference>
<dbReference type="GO" id="GO:0000978">
    <property type="term" value="F:RNA polymerase II cis-regulatory region sequence-specific DNA binding"/>
    <property type="evidence" value="ECO:0000315"/>
    <property type="project" value="UniProtKB"/>
</dbReference>
<dbReference type="GO" id="GO:0030154">
    <property type="term" value="P:cell differentiation"/>
    <property type="evidence" value="ECO:0000318"/>
    <property type="project" value="GO_Central"/>
</dbReference>
<dbReference type="GO" id="GO:0007399">
    <property type="term" value="P:nervous system development"/>
    <property type="evidence" value="ECO:0007669"/>
    <property type="project" value="UniProtKB-KW"/>
</dbReference>
<dbReference type="GO" id="GO:0045944">
    <property type="term" value="P:positive regulation of transcription by RNA polymerase II"/>
    <property type="evidence" value="ECO:0000315"/>
    <property type="project" value="WormBase"/>
</dbReference>
<dbReference type="GO" id="GO:0045664">
    <property type="term" value="P:regulation of neuron differentiation"/>
    <property type="evidence" value="ECO:0000315"/>
    <property type="project" value="UniProtKB"/>
</dbReference>
<dbReference type="GO" id="GO:0050807">
    <property type="term" value="P:regulation of synapse organization"/>
    <property type="evidence" value="ECO:0000315"/>
    <property type="project" value="UniProtKB"/>
</dbReference>
<dbReference type="GO" id="GO:0006357">
    <property type="term" value="P:regulation of transcription by RNA polymerase II"/>
    <property type="evidence" value="ECO:0000315"/>
    <property type="project" value="UniProtKB"/>
</dbReference>
<dbReference type="GO" id="GO:0034243">
    <property type="term" value="P:regulation of transcription elongation by RNA polymerase II"/>
    <property type="evidence" value="ECO:0000250"/>
    <property type="project" value="WormBase"/>
</dbReference>
<dbReference type="CDD" id="cd00086">
    <property type="entry name" value="homeodomain"/>
    <property type="match status" value="1"/>
</dbReference>
<dbReference type="Gene3D" id="1.10.10.60">
    <property type="entry name" value="Homeodomain-like"/>
    <property type="match status" value="1"/>
</dbReference>
<dbReference type="InterPro" id="IPR001356">
    <property type="entry name" value="HD"/>
</dbReference>
<dbReference type="InterPro" id="IPR020479">
    <property type="entry name" value="HD_metazoa"/>
</dbReference>
<dbReference type="InterPro" id="IPR017970">
    <property type="entry name" value="Homeobox_CS"/>
</dbReference>
<dbReference type="InterPro" id="IPR050394">
    <property type="entry name" value="Homeobox_NK-like"/>
</dbReference>
<dbReference type="InterPro" id="IPR009057">
    <property type="entry name" value="Homeodomain-like_sf"/>
</dbReference>
<dbReference type="InterPro" id="IPR000047">
    <property type="entry name" value="HTH_motif"/>
</dbReference>
<dbReference type="PANTHER" id="PTHR24340:SF116">
    <property type="entry name" value="HOMEOBOX PROTEIN CEH-28"/>
    <property type="match status" value="1"/>
</dbReference>
<dbReference type="PANTHER" id="PTHR24340">
    <property type="entry name" value="HOMEOBOX PROTEIN NKX"/>
    <property type="match status" value="1"/>
</dbReference>
<dbReference type="Pfam" id="PF00046">
    <property type="entry name" value="Homeodomain"/>
    <property type="match status" value="1"/>
</dbReference>
<dbReference type="PRINTS" id="PR00024">
    <property type="entry name" value="HOMEOBOX"/>
</dbReference>
<dbReference type="PRINTS" id="PR00031">
    <property type="entry name" value="HTHREPRESSR"/>
</dbReference>
<dbReference type="SMART" id="SM00389">
    <property type="entry name" value="HOX"/>
    <property type="match status" value="1"/>
</dbReference>
<dbReference type="SUPFAM" id="SSF46689">
    <property type="entry name" value="Homeodomain-like"/>
    <property type="match status" value="1"/>
</dbReference>
<dbReference type="PROSITE" id="PS00027">
    <property type="entry name" value="HOMEOBOX_1"/>
    <property type="match status" value="1"/>
</dbReference>
<dbReference type="PROSITE" id="PS50071">
    <property type="entry name" value="HOMEOBOX_2"/>
    <property type="match status" value="1"/>
</dbReference>
<feature type="chain" id="PRO_0000452001" description="Homeobox protein ceh-28">
    <location>
        <begin position="1"/>
        <end position="201"/>
    </location>
</feature>
<feature type="DNA-binding region" description="Homeobox" evidence="1">
    <location>
        <begin position="104"/>
        <end position="163"/>
    </location>
</feature>
<feature type="region of interest" description="Disordered" evidence="3">
    <location>
        <begin position="72"/>
        <end position="94"/>
    </location>
</feature>
<feature type="compositionally biased region" description="Polar residues" evidence="3">
    <location>
        <begin position="72"/>
        <end position="84"/>
    </location>
</feature>
<accession>G5EE18</accession>
<gene>
    <name evidence="11" type="primary">ceh-28</name>
    <name evidence="11" type="ORF">K03A11.3</name>
</gene>
<protein>
    <recommendedName>
        <fullName evidence="8">Homeobox protein ceh-28</fullName>
    </recommendedName>
    <alternativeName>
        <fullName evidence="7">NK-2 homeodomain factor CEH-28</fullName>
    </alternativeName>
</protein>
<sequence length="201" mass="22995">MQSTQISSTTVILPSEVIQPPQQSAVPSEFKNTLPSRLNLFEGFDQSFSELTNPYQPVIPLMQRESLLGASSYYSSPSQNQRSYQNHRQHSNPDTINLRSQQQKRKPRVLFTQHQVNELEERFKKQRYVTATEREELAQCLGLTATQVKIWFQNRRYKCKRLAQDRTLQLSQIPFNPMFASAFPFGINSFGTAPSSSSSGS</sequence>
<reference evidence="9" key="1">
    <citation type="journal article" date="2008" name="Dev. Neurobiol.">
        <title>Behavioral and synaptic defects in C. elegans lacking the NK-2 homeobox gene ceh-28.</title>
        <authorList>
            <person name="Ray P."/>
            <person name="Schnabel R."/>
            <person name="Okkema P.G."/>
        </authorList>
    </citation>
    <scope>NUCLEOTIDE SEQUENCE [MRNA]</scope>
    <scope>FUNCTION</scope>
    <scope>DEVELOPMENTAL STAGE</scope>
    <scope>DISRUPTION PHENOTYPE</scope>
</reference>
<reference evidence="10" key="2">
    <citation type="journal article" date="1998" name="Science">
        <title>Genome sequence of the nematode C. elegans: a platform for investigating biology.</title>
        <authorList>
            <consortium name="The C. elegans sequencing consortium"/>
        </authorList>
    </citation>
    <scope>NUCLEOTIDE SEQUENCE [LARGE SCALE GENOMIC DNA]</scope>
    <source>
        <strain evidence="10">Bristol N2</strain>
    </source>
</reference>
<reference evidence="8" key="3">
    <citation type="journal article" date="2014" name="Dev. Biol.">
        <title>CEH-28 activates dbl-1 expression and TGF-beta signaling in the C. elegans M4 neuron.</title>
        <authorList>
            <person name="Ramakrishnan K."/>
            <person name="Ray P."/>
            <person name="Okkema P.G."/>
        </authorList>
    </citation>
    <scope>FUNCTION</scope>
    <scope>DISRUPTION PHENOTYPE</scope>
</reference>
<reference evidence="8" key="4">
    <citation type="journal article" date="2014" name="PLoS ONE">
        <title>Regulation of C. elegans neuronal differentiation by the ZEB-family factor ZAG-1 and the NK-2 homeodomain factor CEH-28.</title>
        <authorList>
            <person name="Ramakrishnan K."/>
            <person name="Okkema P.G."/>
        </authorList>
    </citation>
    <scope>FUNCTION</scope>
</reference>
<name>CEH28_CAEEL</name>
<proteinExistence type="evidence at transcript level"/>
<evidence type="ECO:0000255" key="1">
    <source>
        <dbReference type="PROSITE-ProRule" id="PRU00108"/>
    </source>
</evidence>
<evidence type="ECO:0000255" key="2">
    <source>
        <dbReference type="RuleBase" id="RU000682"/>
    </source>
</evidence>
<evidence type="ECO:0000256" key="3">
    <source>
        <dbReference type="SAM" id="MobiDB-lite"/>
    </source>
</evidence>
<evidence type="ECO:0000269" key="4">
    <source>
    </source>
</evidence>
<evidence type="ECO:0000269" key="5">
    <source>
    </source>
</evidence>
<evidence type="ECO:0000269" key="6">
    <source>
    </source>
</evidence>
<evidence type="ECO:0000303" key="7">
    <source>
    </source>
</evidence>
<evidence type="ECO:0000305" key="8"/>
<evidence type="ECO:0000312" key="9">
    <source>
        <dbReference type="EMBL" id="AAO46042.2"/>
    </source>
</evidence>
<evidence type="ECO:0000312" key="10">
    <source>
        <dbReference type="Proteomes" id="UP000001940"/>
    </source>
</evidence>
<evidence type="ECO:0000312" key="11">
    <source>
        <dbReference type="WormBase" id="K03A11.3"/>
    </source>
</evidence>
<comment type="function">
    <text evidence="4 5 6">Probable transcription factor that regulates neuronal differention, including synapse assembly of the cholinergic motor neuron M4 (PubMed:24690231, PubMed:25474681). Activates expression of growth factor, neuropeptide and transcription factor genes, such as TGF-beta dbl-1, FMRFamide-like flp-5 and transcription repressor zag-1, in the M4 neuron (PubMed:24690231, PubMed:25474681). Required for pharynx peristalsis (PubMed:18161854).</text>
</comment>
<comment type="subcellular location">
    <subcellularLocation>
        <location evidence="1 2">Nucleus</location>
    </subcellularLocation>
</comment>
<comment type="developmental stage">
    <text evidence="4">Expressed from 172 minutes after the first cleavage, in the ABalaappa cell and continuing in its daughters, and in the cholinergic motor neuron M4 from mid-embryogenesis through to adult stages.</text>
</comment>
<comment type="disruption phenotype">
    <text evidence="4 5">Reduced pharynx pumping rate and abnormal isthmus peristalses in L1 stage larvae (PubMed:18161854). Feeding defects, characterized by a stuffed pharynx, as a result of ingested E.coli packing the lumen of the corpus and anterior isthmus in L4 stage larvae (PubMed:18161854). Defects in pharyngeal g1 gland cell morphology (PubMed:24690231). Reduced expression of TGF-beta, dbl-1, in the cholinergic motor neuron M4, but normal expression of other markers of differentiation, such as serotonin receptor ser-7b and the vesicular acetylcholine transporter unc-17 (PubMed:18161854).</text>
</comment>
<comment type="similarity">
    <text evidence="8">Belongs to the NK-2 homeobox family.</text>
</comment>
<organism evidence="10">
    <name type="scientific">Caenorhabditis elegans</name>
    <dbReference type="NCBI Taxonomy" id="6239"/>
    <lineage>
        <taxon>Eukaryota</taxon>
        <taxon>Metazoa</taxon>
        <taxon>Ecdysozoa</taxon>
        <taxon>Nematoda</taxon>
        <taxon>Chromadorea</taxon>
        <taxon>Rhabditida</taxon>
        <taxon>Rhabditina</taxon>
        <taxon>Rhabditomorpha</taxon>
        <taxon>Rhabditoidea</taxon>
        <taxon>Rhabditidae</taxon>
        <taxon>Peloderinae</taxon>
        <taxon>Caenorhabditis</taxon>
    </lineage>
</organism>